<dbReference type="EMBL" id="AE008917">
    <property type="protein sequence ID" value="AAL51935.1"/>
    <property type="molecule type" value="Genomic_DNA"/>
</dbReference>
<dbReference type="PIR" id="AD3346">
    <property type="entry name" value="AD3346"/>
</dbReference>
<dbReference type="RefSeq" id="WP_004683927.1">
    <property type="nucleotide sequence ID" value="NZ_GG703780.1"/>
</dbReference>
<dbReference type="SMR" id="Q8YHP3"/>
<dbReference type="GeneID" id="29593555"/>
<dbReference type="KEGG" id="bme:BMEI0754"/>
<dbReference type="KEGG" id="bmel:DK63_668"/>
<dbReference type="PATRIC" id="fig|224914.52.peg.699"/>
<dbReference type="eggNOG" id="COG0480">
    <property type="taxonomic scope" value="Bacteria"/>
</dbReference>
<dbReference type="PhylomeDB" id="Q8YHP3"/>
<dbReference type="Proteomes" id="UP000000419">
    <property type="component" value="Chromosome I"/>
</dbReference>
<dbReference type="GO" id="GO:0005737">
    <property type="term" value="C:cytoplasm"/>
    <property type="evidence" value="ECO:0007669"/>
    <property type="project" value="UniProtKB-SubCell"/>
</dbReference>
<dbReference type="GO" id="GO:0005525">
    <property type="term" value="F:GTP binding"/>
    <property type="evidence" value="ECO:0007669"/>
    <property type="project" value="UniProtKB-UniRule"/>
</dbReference>
<dbReference type="GO" id="GO:0003924">
    <property type="term" value="F:GTPase activity"/>
    <property type="evidence" value="ECO:0007669"/>
    <property type="project" value="InterPro"/>
</dbReference>
<dbReference type="GO" id="GO:0097216">
    <property type="term" value="F:guanosine tetraphosphate binding"/>
    <property type="evidence" value="ECO:0007669"/>
    <property type="project" value="UniProtKB-ARBA"/>
</dbReference>
<dbReference type="GO" id="GO:0003746">
    <property type="term" value="F:translation elongation factor activity"/>
    <property type="evidence" value="ECO:0007669"/>
    <property type="project" value="UniProtKB-UniRule"/>
</dbReference>
<dbReference type="GO" id="GO:0032790">
    <property type="term" value="P:ribosome disassembly"/>
    <property type="evidence" value="ECO:0007669"/>
    <property type="project" value="TreeGrafter"/>
</dbReference>
<dbReference type="CDD" id="cd01886">
    <property type="entry name" value="EF-G"/>
    <property type="match status" value="1"/>
</dbReference>
<dbReference type="CDD" id="cd16262">
    <property type="entry name" value="EFG_III"/>
    <property type="match status" value="1"/>
</dbReference>
<dbReference type="CDD" id="cd01434">
    <property type="entry name" value="EFG_mtEFG1_IV"/>
    <property type="match status" value="1"/>
</dbReference>
<dbReference type="CDD" id="cd03713">
    <property type="entry name" value="EFG_mtEFG_C"/>
    <property type="match status" value="1"/>
</dbReference>
<dbReference type="CDD" id="cd04088">
    <property type="entry name" value="EFG_mtEFG_II"/>
    <property type="match status" value="1"/>
</dbReference>
<dbReference type="FunFam" id="2.40.30.10:FF:000006">
    <property type="entry name" value="Elongation factor G"/>
    <property type="match status" value="1"/>
</dbReference>
<dbReference type="FunFam" id="3.30.230.10:FF:000003">
    <property type="entry name" value="Elongation factor G"/>
    <property type="match status" value="1"/>
</dbReference>
<dbReference type="FunFam" id="3.30.70.240:FF:000001">
    <property type="entry name" value="Elongation factor G"/>
    <property type="match status" value="1"/>
</dbReference>
<dbReference type="FunFam" id="3.30.70.870:FF:000001">
    <property type="entry name" value="Elongation factor G"/>
    <property type="match status" value="1"/>
</dbReference>
<dbReference type="FunFam" id="3.40.50.300:FF:000029">
    <property type="entry name" value="Elongation factor G"/>
    <property type="match status" value="1"/>
</dbReference>
<dbReference type="Gene3D" id="3.30.230.10">
    <property type="match status" value="1"/>
</dbReference>
<dbReference type="Gene3D" id="3.30.70.240">
    <property type="match status" value="1"/>
</dbReference>
<dbReference type="Gene3D" id="3.30.70.870">
    <property type="entry name" value="Elongation Factor G (Translational Gtpase), domain 3"/>
    <property type="match status" value="1"/>
</dbReference>
<dbReference type="Gene3D" id="3.40.50.300">
    <property type="entry name" value="P-loop containing nucleotide triphosphate hydrolases"/>
    <property type="match status" value="1"/>
</dbReference>
<dbReference type="Gene3D" id="2.40.30.10">
    <property type="entry name" value="Translation factors"/>
    <property type="match status" value="1"/>
</dbReference>
<dbReference type="HAMAP" id="MF_00054_B">
    <property type="entry name" value="EF_G_EF_2_B"/>
    <property type="match status" value="1"/>
</dbReference>
<dbReference type="InterPro" id="IPR041095">
    <property type="entry name" value="EFG_II"/>
</dbReference>
<dbReference type="InterPro" id="IPR009022">
    <property type="entry name" value="EFG_III"/>
</dbReference>
<dbReference type="InterPro" id="IPR035647">
    <property type="entry name" value="EFG_III/V"/>
</dbReference>
<dbReference type="InterPro" id="IPR047872">
    <property type="entry name" value="EFG_IV"/>
</dbReference>
<dbReference type="InterPro" id="IPR035649">
    <property type="entry name" value="EFG_V"/>
</dbReference>
<dbReference type="InterPro" id="IPR000640">
    <property type="entry name" value="EFG_V-like"/>
</dbReference>
<dbReference type="InterPro" id="IPR004161">
    <property type="entry name" value="EFTu-like_2"/>
</dbReference>
<dbReference type="InterPro" id="IPR031157">
    <property type="entry name" value="G_TR_CS"/>
</dbReference>
<dbReference type="InterPro" id="IPR027417">
    <property type="entry name" value="P-loop_NTPase"/>
</dbReference>
<dbReference type="InterPro" id="IPR020568">
    <property type="entry name" value="Ribosomal_Su5_D2-typ_SF"/>
</dbReference>
<dbReference type="InterPro" id="IPR014721">
    <property type="entry name" value="Ribsml_uS5_D2-typ_fold_subgr"/>
</dbReference>
<dbReference type="InterPro" id="IPR005225">
    <property type="entry name" value="Small_GTP-bd"/>
</dbReference>
<dbReference type="InterPro" id="IPR000795">
    <property type="entry name" value="T_Tr_GTP-bd_dom"/>
</dbReference>
<dbReference type="InterPro" id="IPR009000">
    <property type="entry name" value="Transl_B-barrel_sf"/>
</dbReference>
<dbReference type="InterPro" id="IPR004540">
    <property type="entry name" value="Transl_elong_EFG/EF2"/>
</dbReference>
<dbReference type="InterPro" id="IPR005517">
    <property type="entry name" value="Transl_elong_EFG/EF2_IV"/>
</dbReference>
<dbReference type="NCBIfam" id="TIGR00484">
    <property type="entry name" value="EF-G"/>
    <property type="match status" value="1"/>
</dbReference>
<dbReference type="NCBIfam" id="NF009381">
    <property type="entry name" value="PRK12740.1-5"/>
    <property type="match status" value="1"/>
</dbReference>
<dbReference type="NCBIfam" id="TIGR00231">
    <property type="entry name" value="small_GTP"/>
    <property type="match status" value="1"/>
</dbReference>
<dbReference type="PANTHER" id="PTHR43261:SF1">
    <property type="entry name" value="RIBOSOME-RELEASING FACTOR 2, MITOCHONDRIAL"/>
    <property type="match status" value="1"/>
</dbReference>
<dbReference type="PANTHER" id="PTHR43261">
    <property type="entry name" value="TRANSLATION ELONGATION FACTOR G-RELATED"/>
    <property type="match status" value="1"/>
</dbReference>
<dbReference type="Pfam" id="PF00679">
    <property type="entry name" value="EFG_C"/>
    <property type="match status" value="1"/>
</dbReference>
<dbReference type="Pfam" id="PF14492">
    <property type="entry name" value="EFG_III"/>
    <property type="match status" value="1"/>
</dbReference>
<dbReference type="Pfam" id="PF03764">
    <property type="entry name" value="EFG_IV"/>
    <property type="match status" value="1"/>
</dbReference>
<dbReference type="Pfam" id="PF00009">
    <property type="entry name" value="GTP_EFTU"/>
    <property type="match status" value="1"/>
</dbReference>
<dbReference type="Pfam" id="PF03144">
    <property type="entry name" value="GTP_EFTU_D2"/>
    <property type="match status" value="1"/>
</dbReference>
<dbReference type="PRINTS" id="PR00315">
    <property type="entry name" value="ELONGATNFCT"/>
</dbReference>
<dbReference type="SMART" id="SM00838">
    <property type="entry name" value="EFG_C"/>
    <property type="match status" value="1"/>
</dbReference>
<dbReference type="SMART" id="SM00889">
    <property type="entry name" value="EFG_IV"/>
    <property type="match status" value="1"/>
</dbReference>
<dbReference type="SUPFAM" id="SSF54980">
    <property type="entry name" value="EF-G C-terminal domain-like"/>
    <property type="match status" value="2"/>
</dbReference>
<dbReference type="SUPFAM" id="SSF52540">
    <property type="entry name" value="P-loop containing nucleoside triphosphate hydrolases"/>
    <property type="match status" value="1"/>
</dbReference>
<dbReference type="SUPFAM" id="SSF54211">
    <property type="entry name" value="Ribosomal protein S5 domain 2-like"/>
    <property type="match status" value="1"/>
</dbReference>
<dbReference type="SUPFAM" id="SSF50447">
    <property type="entry name" value="Translation proteins"/>
    <property type="match status" value="1"/>
</dbReference>
<dbReference type="PROSITE" id="PS00301">
    <property type="entry name" value="G_TR_1"/>
    <property type="match status" value="1"/>
</dbReference>
<dbReference type="PROSITE" id="PS51722">
    <property type="entry name" value="G_TR_2"/>
    <property type="match status" value="1"/>
</dbReference>
<evidence type="ECO:0000255" key="1">
    <source>
        <dbReference type="HAMAP-Rule" id="MF_00054"/>
    </source>
</evidence>
<keyword id="KW-0963">Cytoplasm</keyword>
<keyword id="KW-0251">Elongation factor</keyword>
<keyword id="KW-0342">GTP-binding</keyword>
<keyword id="KW-0547">Nucleotide-binding</keyword>
<keyword id="KW-0648">Protein biosynthesis</keyword>
<gene>
    <name evidence="1" type="primary">fusA</name>
    <name type="ordered locus">BMEI0754</name>
</gene>
<comment type="function">
    <text evidence="1">Catalyzes the GTP-dependent ribosomal translocation step during translation elongation. During this step, the ribosome changes from the pre-translocational (PRE) to the post-translocational (POST) state as the newly formed A-site-bound peptidyl-tRNA and P-site-bound deacylated tRNA move to the P and E sites, respectively. Catalyzes the coordinated movement of the two tRNA molecules, the mRNA and conformational changes in the ribosome.</text>
</comment>
<comment type="subcellular location">
    <subcellularLocation>
        <location evidence="1">Cytoplasm</location>
    </subcellularLocation>
</comment>
<comment type="similarity">
    <text evidence="1">Belongs to the TRAFAC class translation factor GTPase superfamily. Classic translation factor GTPase family. EF-G/EF-2 subfamily.</text>
</comment>
<feature type="chain" id="PRO_0000091088" description="Elongation factor G">
    <location>
        <begin position="1"/>
        <end position="694"/>
    </location>
</feature>
<feature type="domain" description="tr-type G">
    <location>
        <begin position="8"/>
        <end position="287"/>
    </location>
</feature>
<feature type="binding site" evidence="1">
    <location>
        <begin position="17"/>
        <end position="24"/>
    </location>
    <ligand>
        <name>GTP</name>
        <dbReference type="ChEBI" id="CHEBI:37565"/>
    </ligand>
</feature>
<feature type="binding site" evidence="1">
    <location>
        <begin position="86"/>
        <end position="90"/>
    </location>
    <ligand>
        <name>GTP</name>
        <dbReference type="ChEBI" id="CHEBI:37565"/>
    </ligand>
</feature>
<feature type="binding site" evidence="1">
    <location>
        <begin position="140"/>
        <end position="143"/>
    </location>
    <ligand>
        <name>GTP</name>
        <dbReference type="ChEBI" id="CHEBI:37565"/>
    </ligand>
</feature>
<accession>Q8YHP3</accession>
<organism>
    <name type="scientific">Brucella melitensis biotype 1 (strain ATCC 23456 / CCUG 17765 / NCTC 10094 / 16M)</name>
    <dbReference type="NCBI Taxonomy" id="224914"/>
    <lineage>
        <taxon>Bacteria</taxon>
        <taxon>Pseudomonadati</taxon>
        <taxon>Pseudomonadota</taxon>
        <taxon>Alphaproteobacteria</taxon>
        <taxon>Hyphomicrobiales</taxon>
        <taxon>Brucellaceae</taxon>
        <taxon>Brucella/Ochrobactrum group</taxon>
        <taxon>Brucella</taxon>
    </lineage>
</organism>
<name>EFG_BRUME</name>
<protein>
    <recommendedName>
        <fullName evidence="1">Elongation factor G</fullName>
        <shortName evidence="1">EF-G</shortName>
    </recommendedName>
</protein>
<reference key="1">
    <citation type="journal article" date="2002" name="Proc. Natl. Acad. Sci. U.S.A.">
        <title>The genome sequence of the facultative intracellular pathogen Brucella melitensis.</title>
        <authorList>
            <person name="DelVecchio V.G."/>
            <person name="Kapatral V."/>
            <person name="Redkar R.J."/>
            <person name="Patra G."/>
            <person name="Mujer C."/>
            <person name="Los T."/>
            <person name="Ivanova N."/>
            <person name="Anderson I."/>
            <person name="Bhattacharyya A."/>
            <person name="Lykidis A."/>
            <person name="Reznik G."/>
            <person name="Jablonski L."/>
            <person name="Larsen N."/>
            <person name="D'Souza M."/>
            <person name="Bernal A."/>
            <person name="Mazur M."/>
            <person name="Goltsman E."/>
            <person name="Selkov E."/>
            <person name="Elzer P.H."/>
            <person name="Hagius S."/>
            <person name="O'Callaghan D."/>
            <person name="Letesson J.-J."/>
            <person name="Haselkorn R."/>
            <person name="Kyrpides N.C."/>
            <person name="Overbeek R."/>
        </authorList>
    </citation>
    <scope>NUCLEOTIDE SEQUENCE [LARGE SCALE GENOMIC DNA]</scope>
    <source>
        <strain>ATCC 23456 / CCUG 17765 / NCTC 10094 / 16M</strain>
    </source>
</reference>
<sequence length="694" mass="76295">MAREYKIEDYRNFGIMAHIDAGKTTMTERILFYTGKNHKIGETHDGASTMDWMEQEQERGITITSAATTTFWQGRDGKKRRFNIIDTPGHVDFTIEVERSLRVLDGAIALLDANAGVEPQTETVWRQAEKYHVPRMVFVNKMDKIGADFYRSVEMVGSRLGAVALPVQLPIGAENDFVGVVDLIEMKALTWDGTIGAPATVGEIPADMADKAEEYREKLIELAVEIDEAAMEAYLEGTMPTNDELRALIRKGTIEVKFHPILCGTAFKNRGVQPLLDAVVEFLPAPTDVPAIKGIDVKTETETTRESSDEAPLSMLAFKIMNDPFVGSLTFTRIYSGKLTKGVSLENTVKGKRERIGRMLQMHSNSREDIDEAFAGDIVALAGLKETTTGDTLCDPLKPVILERMEFPDPVIEIAIEPKTKADQEKMGIALNRLAAEDPSFRVKSDEESGQTIIAGMGELHLDILVDRMKREFKVEANVGAPQVAYRESITRAAEIDYTHKKQSGGSGQFARVKIIFEPHDGDDFIFESKIVGGSVPKEYIPGVQKGIESVMGAGPLAGFPMLGVKATLIDGAYHDVDSSVLAFEIASRAAFREGAQKAGAQLLEPIMKVEVVTPEDYVGDVIGDLNSRRGQISGTEARGIATVVNAMVPLANMFGYVNSLRSMSQGRAQYTMQFDHYEPVPTAVAQEIQKKFA</sequence>
<proteinExistence type="inferred from homology"/>